<accession>A0JXX7</accession>
<comment type="function">
    <text evidence="1">Catalyzes the isomerization between 2-isopropylmalate and 3-isopropylmalate, via the formation of 2-isopropylmaleate.</text>
</comment>
<comment type="catalytic activity">
    <reaction evidence="1">
        <text>(2R,3S)-3-isopropylmalate = (2S)-2-isopropylmalate</text>
        <dbReference type="Rhea" id="RHEA:32287"/>
        <dbReference type="ChEBI" id="CHEBI:1178"/>
        <dbReference type="ChEBI" id="CHEBI:35121"/>
        <dbReference type="EC" id="4.2.1.33"/>
    </reaction>
</comment>
<comment type="pathway">
    <text evidence="1">Amino-acid biosynthesis; L-leucine biosynthesis; L-leucine from 3-methyl-2-oxobutanoate: step 2/4.</text>
</comment>
<comment type="subunit">
    <text evidence="1">Heterodimer of LeuC and LeuD.</text>
</comment>
<comment type="similarity">
    <text evidence="1">Belongs to the LeuD family. LeuD type 1 subfamily.</text>
</comment>
<gene>
    <name evidence="1" type="primary">leuD</name>
    <name type="ordered locus">Arth_2518</name>
</gene>
<protein>
    <recommendedName>
        <fullName evidence="1">3-isopropylmalate dehydratase small subunit</fullName>
        <ecNumber evidence="1">4.2.1.33</ecNumber>
    </recommendedName>
    <alternativeName>
        <fullName evidence="1">Alpha-IPM isomerase</fullName>
        <shortName evidence="1">IPMI</shortName>
    </alternativeName>
    <alternativeName>
        <fullName evidence="1">Isopropylmalate isomerase</fullName>
    </alternativeName>
</protein>
<sequence length="200" mass="22100">MEKFSTHTGIGVPLRQSNVDTDQIIPAVYLKRITRTGFEDALFAAWRKDPAFILNQEPFNAGSVLVAGPDFGTGSSREHAVWALKDFGFKTVLSSRFADIFRGNSGKQGLLAAEVAQDDIELIWKVLENAPGTEVTVDLVSKTVMCGNVVAPFEIDDYTRWRLLEGLDDIGLTLQHEEDITAYEATRPAFKPKTLPARLS</sequence>
<dbReference type="EC" id="4.2.1.33" evidence="1"/>
<dbReference type="EMBL" id="CP000454">
    <property type="protein sequence ID" value="ABK03897.1"/>
    <property type="molecule type" value="Genomic_DNA"/>
</dbReference>
<dbReference type="RefSeq" id="WP_011692359.1">
    <property type="nucleotide sequence ID" value="NC_008541.1"/>
</dbReference>
<dbReference type="SMR" id="A0JXX7"/>
<dbReference type="STRING" id="290399.Arth_2518"/>
<dbReference type="KEGG" id="art:Arth_2518"/>
<dbReference type="eggNOG" id="COG0066">
    <property type="taxonomic scope" value="Bacteria"/>
</dbReference>
<dbReference type="HOGENOM" id="CLU_081378_0_1_11"/>
<dbReference type="OrthoDB" id="9777465at2"/>
<dbReference type="UniPathway" id="UPA00048">
    <property type="reaction ID" value="UER00071"/>
</dbReference>
<dbReference type="Proteomes" id="UP000000754">
    <property type="component" value="Chromosome"/>
</dbReference>
<dbReference type="GO" id="GO:0009316">
    <property type="term" value="C:3-isopropylmalate dehydratase complex"/>
    <property type="evidence" value="ECO:0007669"/>
    <property type="project" value="InterPro"/>
</dbReference>
<dbReference type="GO" id="GO:0003861">
    <property type="term" value="F:3-isopropylmalate dehydratase activity"/>
    <property type="evidence" value="ECO:0007669"/>
    <property type="project" value="UniProtKB-UniRule"/>
</dbReference>
<dbReference type="GO" id="GO:0009098">
    <property type="term" value="P:L-leucine biosynthetic process"/>
    <property type="evidence" value="ECO:0007669"/>
    <property type="project" value="UniProtKB-UniRule"/>
</dbReference>
<dbReference type="CDD" id="cd01577">
    <property type="entry name" value="IPMI_Swivel"/>
    <property type="match status" value="1"/>
</dbReference>
<dbReference type="FunFam" id="3.20.19.10:FF:000003">
    <property type="entry name" value="3-isopropylmalate dehydratase small subunit"/>
    <property type="match status" value="1"/>
</dbReference>
<dbReference type="Gene3D" id="3.20.19.10">
    <property type="entry name" value="Aconitase, domain 4"/>
    <property type="match status" value="1"/>
</dbReference>
<dbReference type="HAMAP" id="MF_01031">
    <property type="entry name" value="LeuD_type1"/>
    <property type="match status" value="1"/>
</dbReference>
<dbReference type="InterPro" id="IPR004431">
    <property type="entry name" value="3-IsopropMal_deHydase_ssu"/>
</dbReference>
<dbReference type="InterPro" id="IPR015928">
    <property type="entry name" value="Aconitase/3IPM_dehydase_swvl"/>
</dbReference>
<dbReference type="InterPro" id="IPR000573">
    <property type="entry name" value="AconitaseA/IPMdHydase_ssu_swvl"/>
</dbReference>
<dbReference type="InterPro" id="IPR033940">
    <property type="entry name" value="IPMI_Swivel"/>
</dbReference>
<dbReference type="InterPro" id="IPR050075">
    <property type="entry name" value="LeuD"/>
</dbReference>
<dbReference type="NCBIfam" id="TIGR00171">
    <property type="entry name" value="leuD"/>
    <property type="match status" value="1"/>
</dbReference>
<dbReference type="NCBIfam" id="NF002458">
    <property type="entry name" value="PRK01641.1"/>
    <property type="match status" value="1"/>
</dbReference>
<dbReference type="PANTHER" id="PTHR43345:SF5">
    <property type="entry name" value="3-ISOPROPYLMALATE DEHYDRATASE SMALL SUBUNIT"/>
    <property type="match status" value="1"/>
</dbReference>
<dbReference type="PANTHER" id="PTHR43345">
    <property type="entry name" value="3-ISOPROPYLMALATE DEHYDRATASE SMALL SUBUNIT 2-RELATED-RELATED"/>
    <property type="match status" value="1"/>
</dbReference>
<dbReference type="Pfam" id="PF00694">
    <property type="entry name" value="Aconitase_C"/>
    <property type="match status" value="1"/>
</dbReference>
<dbReference type="SUPFAM" id="SSF52016">
    <property type="entry name" value="LeuD/IlvD-like"/>
    <property type="match status" value="1"/>
</dbReference>
<feature type="chain" id="PRO_1000063731" description="3-isopropylmalate dehydratase small subunit">
    <location>
        <begin position="1"/>
        <end position="200"/>
    </location>
</feature>
<name>LEUD_ARTS2</name>
<evidence type="ECO:0000255" key="1">
    <source>
        <dbReference type="HAMAP-Rule" id="MF_01031"/>
    </source>
</evidence>
<proteinExistence type="inferred from homology"/>
<keyword id="KW-0028">Amino-acid biosynthesis</keyword>
<keyword id="KW-0100">Branched-chain amino acid biosynthesis</keyword>
<keyword id="KW-0432">Leucine biosynthesis</keyword>
<keyword id="KW-0456">Lyase</keyword>
<keyword id="KW-1185">Reference proteome</keyword>
<reference key="1">
    <citation type="journal article" date="2013" name="Stand. Genomic Sci.">
        <title>Complete genome sequence of Arthrobacter sp. strain FB24.</title>
        <authorList>
            <person name="Nakatsu C.H."/>
            <person name="Barabote R."/>
            <person name="Thompson S."/>
            <person name="Bruce D."/>
            <person name="Detter C."/>
            <person name="Brettin T."/>
            <person name="Han C."/>
            <person name="Beasley F."/>
            <person name="Chen W."/>
            <person name="Konopka A."/>
            <person name="Xie G."/>
        </authorList>
    </citation>
    <scope>NUCLEOTIDE SEQUENCE [LARGE SCALE GENOMIC DNA]</scope>
    <source>
        <strain>FB24</strain>
    </source>
</reference>
<organism>
    <name type="scientific">Arthrobacter sp. (strain FB24)</name>
    <dbReference type="NCBI Taxonomy" id="290399"/>
    <lineage>
        <taxon>Bacteria</taxon>
        <taxon>Bacillati</taxon>
        <taxon>Actinomycetota</taxon>
        <taxon>Actinomycetes</taxon>
        <taxon>Micrococcales</taxon>
        <taxon>Micrococcaceae</taxon>
        <taxon>Arthrobacter</taxon>
    </lineage>
</organism>